<feature type="signal peptide" evidence="2">
    <location>
        <begin position="1"/>
        <end position="20"/>
    </location>
</feature>
<feature type="chain" id="PRO_0000011752" description="Thyrotropin subunit beta">
    <location>
        <begin position="21"/>
        <end position="132"/>
    </location>
</feature>
<feature type="propeptide" id="PRO_0000011753">
    <location>
        <begin position="133"/>
        <end position="138"/>
    </location>
</feature>
<feature type="glycosylation site" description="N-linked (GlcNAc...) asparagine" evidence="2">
    <location>
        <position position="43"/>
    </location>
</feature>
<feature type="disulfide bond" evidence="1">
    <location>
        <begin position="22"/>
        <end position="72"/>
    </location>
</feature>
<feature type="disulfide bond" evidence="1">
    <location>
        <begin position="36"/>
        <end position="87"/>
    </location>
</feature>
<feature type="disulfide bond" evidence="1">
    <location>
        <begin position="39"/>
        <end position="125"/>
    </location>
</feature>
<feature type="disulfide bond" evidence="1">
    <location>
        <begin position="47"/>
        <end position="103"/>
    </location>
</feature>
<feature type="disulfide bond" evidence="1">
    <location>
        <begin position="51"/>
        <end position="105"/>
    </location>
</feature>
<feature type="disulfide bond" evidence="1">
    <location>
        <begin position="108"/>
        <end position="115"/>
    </location>
</feature>
<feature type="sequence conflict" description="In Ref. 3; AA sequence." evidence="3" ref="3">
    <original>INT</original>
    <variation>VNS</variation>
    <location>
        <begin position="42"/>
        <end position="44"/>
    </location>
</feature>
<feature type="sequence conflict" description="In Ref. 3; AA sequence." evidence="3" ref="3">
    <original>N</original>
    <variation>D</variation>
    <location>
        <position position="57"/>
    </location>
</feature>
<feature type="sequence conflict" description="In Ref. 3; AA sequence." evidence="3" ref="3">
    <original>N</original>
    <variation>D</variation>
    <location>
        <position position="109"/>
    </location>
</feature>
<feature type="sequence conflict" description="In Ref. 3; AA sequence." evidence="3" ref="3">
    <original>Q</original>
    <variation>E</variation>
    <location>
        <position position="129"/>
    </location>
</feature>
<name>TSHB_PIG</name>
<reference key="1">
    <citation type="journal article" date="1989" name="Mol. Cell. Endocrinol.">
        <title>Molecular cloning of cDNAs for precursors of porcine pituitary glycoprotein hormone common alpha-subunit and of thyroid stimulating hormone beta-subunit.</title>
        <authorList>
            <person name="Hirai T."/>
            <person name="Takikawa H."/>
            <person name="Kato Y."/>
        </authorList>
    </citation>
    <scope>NUCLEOTIDE SEQUENCE [MRNA]</scope>
</reference>
<reference key="2">
    <citation type="journal article" date="1996" name="J. Anim. Sci.">
        <title>Overexpression of beta-subunit of thyroid-stimulating hormone in Meishan swine identified by differential display.</title>
        <authorList>
            <person name="Li M.D."/>
            <person name="Matteri R.L."/>
            <person name="Macdonald G.J."/>
            <person name="Wise T.H."/>
            <person name="Ford J.J."/>
        </authorList>
    </citation>
    <scope>NUCLEOTIDE SEQUENCE [MRNA]</scope>
    <source>
        <strain>Meishan</strain>
        <tissue>Pituitary</tissue>
    </source>
</reference>
<reference key="3">
    <citation type="journal article" date="1976" name="Eur. J. Biochem.">
        <title>Porcine thyrotropin. The amino-acid sequence of the alpha and beta subunits.</title>
        <authorList>
            <person name="Maghuin-Rogister G."/>
            <person name="Hennen G."/>
            <person name="Closset J."/>
            <person name="Kopeyan C."/>
        </authorList>
    </citation>
    <scope>PROTEIN SEQUENCE OF 21-132</scope>
</reference>
<keyword id="KW-0903">Direct protein sequencing</keyword>
<keyword id="KW-1015">Disulfide bond</keyword>
<keyword id="KW-0325">Glycoprotein</keyword>
<keyword id="KW-0372">Hormone</keyword>
<keyword id="KW-1185">Reference proteome</keyword>
<keyword id="KW-0964">Secreted</keyword>
<keyword id="KW-0732">Signal</keyword>
<protein>
    <recommendedName>
        <fullName>Thyrotropin subunit beta</fullName>
    </recommendedName>
    <alternativeName>
        <fullName>Thyroid-stimulating hormone subunit beta</fullName>
        <shortName>TSH-B</shortName>
        <shortName>TSH-beta</shortName>
    </alternativeName>
    <alternativeName>
        <fullName>Thyrotropin beta chain</fullName>
    </alternativeName>
</protein>
<comment type="function">
    <text>Indispensable for the control of thyroid structure and metabolism.</text>
</comment>
<comment type="subunit">
    <text>Heterodimer of a common alpha chain and a unique beta chain which confers biological specificity to thyrotropin, lutropin, follitropin and gonadotropin.</text>
</comment>
<comment type="subcellular location">
    <subcellularLocation>
        <location>Secreted</location>
    </subcellularLocation>
</comment>
<comment type="similarity">
    <text evidence="3">Belongs to the glycoprotein hormones subunit beta family.</text>
</comment>
<gene>
    <name type="primary">TSHB</name>
</gene>
<dbReference type="EMBL" id="U39816">
    <property type="protein sequence ID" value="AAA93182.1"/>
    <property type="molecule type" value="mRNA"/>
</dbReference>
<dbReference type="PIR" id="B30339">
    <property type="entry name" value="TTPGB"/>
</dbReference>
<dbReference type="RefSeq" id="NP_999533.1">
    <property type="nucleotide sequence ID" value="NM_214368.2"/>
</dbReference>
<dbReference type="SMR" id="P01224"/>
<dbReference type="FunCoup" id="P01224">
    <property type="interactions" value="161"/>
</dbReference>
<dbReference type="STRING" id="9823.ENSSSCP00000007199"/>
<dbReference type="GlyCosmos" id="P01224">
    <property type="glycosylation" value="1 site, No reported glycans"/>
</dbReference>
<dbReference type="GlyGen" id="P01224">
    <property type="glycosylation" value="1 site"/>
</dbReference>
<dbReference type="iPTMnet" id="P01224"/>
<dbReference type="PaxDb" id="9823-ENSSSCP00000007199"/>
<dbReference type="Ensembl" id="ENSSSCT00025023082.1">
    <property type="protein sequence ID" value="ENSSSCP00025009629.1"/>
    <property type="gene ID" value="ENSSSCG00025017097.1"/>
</dbReference>
<dbReference type="Ensembl" id="ENSSSCT00035056694.1">
    <property type="protein sequence ID" value="ENSSSCP00035022806.1"/>
    <property type="gene ID" value="ENSSSCG00035042656.1"/>
</dbReference>
<dbReference type="Ensembl" id="ENSSSCT00040084814.1">
    <property type="protein sequence ID" value="ENSSSCP00040037026.1"/>
    <property type="gene ID" value="ENSSSCG00040062231.1"/>
</dbReference>
<dbReference type="Ensembl" id="ENSSSCT00050059083.1">
    <property type="protein sequence ID" value="ENSSSCP00050025352.1"/>
    <property type="gene ID" value="ENSSSCG00050043418.1"/>
</dbReference>
<dbReference type="Ensembl" id="ENSSSCT00055026937.1">
    <property type="protein sequence ID" value="ENSSSCP00055021413.1"/>
    <property type="gene ID" value="ENSSSCG00055013684.1"/>
</dbReference>
<dbReference type="Ensembl" id="ENSSSCT00060101618.1">
    <property type="protein sequence ID" value="ENSSSCP00060044142.1"/>
    <property type="gene ID" value="ENSSSCG00060074274.1"/>
</dbReference>
<dbReference type="Ensembl" id="ENSSSCT00070008652.1">
    <property type="protein sequence ID" value="ENSSSCP00070007126.1"/>
    <property type="gene ID" value="ENSSSCG00070004588.1"/>
</dbReference>
<dbReference type="Ensembl" id="ENSSSCT00115037789">
    <property type="protein sequence ID" value="ENSSSCP00115035692"/>
    <property type="gene ID" value="ENSSSCG00115021342"/>
</dbReference>
<dbReference type="GeneID" id="397658"/>
<dbReference type="KEGG" id="ssc:397658"/>
<dbReference type="CTD" id="7252"/>
<dbReference type="eggNOG" id="ENOG502S2JW">
    <property type="taxonomic scope" value="Eukaryota"/>
</dbReference>
<dbReference type="InParanoid" id="P01224"/>
<dbReference type="OrthoDB" id="8866353at2759"/>
<dbReference type="Reactome" id="R-SSC-209822">
    <property type="pathway name" value="Glycoprotein hormones"/>
</dbReference>
<dbReference type="Reactome" id="R-SSC-209968">
    <property type="pathway name" value="Thyroxine biosynthesis"/>
</dbReference>
<dbReference type="Reactome" id="R-SSC-375281">
    <property type="pathway name" value="Hormone ligand-binding receptors"/>
</dbReference>
<dbReference type="Reactome" id="R-SSC-418555">
    <property type="pathway name" value="G alpha (s) signalling events"/>
</dbReference>
<dbReference type="Proteomes" id="UP000008227">
    <property type="component" value="Unplaced"/>
</dbReference>
<dbReference type="Proteomes" id="UP000314985">
    <property type="component" value="Chromosome 4"/>
</dbReference>
<dbReference type="Proteomes" id="UP000694570">
    <property type="component" value="Unplaced"/>
</dbReference>
<dbReference type="Proteomes" id="UP000694571">
    <property type="component" value="Unplaced"/>
</dbReference>
<dbReference type="Proteomes" id="UP000694720">
    <property type="component" value="Unplaced"/>
</dbReference>
<dbReference type="Proteomes" id="UP000694722">
    <property type="component" value="Unplaced"/>
</dbReference>
<dbReference type="Proteomes" id="UP000694723">
    <property type="component" value="Unplaced"/>
</dbReference>
<dbReference type="Proteomes" id="UP000694724">
    <property type="component" value="Unplaced"/>
</dbReference>
<dbReference type="Proteomes" id="UP000694725">
    <property type="component" value="Unplaced"/>
</dbReference>
<dbReference type="Proteomes" id="UP000694726">
    <property type="component" value="Unplaced"/>
</dbReference>
<dbReference type="Proteomes" id="UP000694727">
    <property type="component" value="Unplaced"/>
</dbReference>
<dbReference type="Proteomes" id="UP000694728">
    <property type="component" value="Unplaced"/>
</dbReference>
<dbReference type="GO" id="GO:0005737">
    <property type="term" value="C:cytoplasm"/>
    <property type="evidence" value="ECO:0000318"/>
    <property type="project" value="GO_Central"/>
</dbReference>
<dbReference type="GO" id="GO:0005615">
    <property type="term" value="C:extracellular space"/>
    <property type="evidence" value="ECO:0000318"/>
    <property type="project" value="GO_Central"/>
</dbReference>
<dbReference type="GO" id="GO:0005179">
    <property type="term" value="F:hormone activity"/>
    <property type="evidence" value="ECO:0007669"/>
    <property type="project" value="UniProtKB-KW"/>
</dbReference>
<dbReference type="GO" id="GO:0007186">
    <property type="term" value="P:G protein-coupled receptor signaling pathway"/>
    <property type="evidence" value="ECO:0000318"/>
    <property type="project" value="GO_Central"/>
</dbReference>
<dbReference type="CDD" id="cd00069">
    <property type="entry name" value="GHB_like"/>
    <property type="match status" value="1"/>
</dbReference>
<dbReference type="FunFam" id="2.10.90.10:FF:000007">
    <property type="entry name" value="Luteinizing hormone beta subunit"/>
    <property type="match status" value="1"/>
</dbReference>
<dbReference type="Gene3D" id="2.10.90.10">
    <property type="entry name" value="Cystine-knot cytokines"/>
    <property type="match status" value="1"/>
</dbReference>
<dbReference type="InterPro" id="IPR029034">
    <property type="entry name" value="Cystine-knot_cytokine"/>
</dbReference>
<dbReference type="InterPro" id="IPR006208">
    <property type="entry name" value="Glyco_hormone_CN"/>
</dbReference>
<dbReference type="InterPro" id="IPR001545">
    <property type="entry name" value="Gonadotropin_bsu"/>
</dbReference>
<dbReference type="InterPro" id="IPR018245">
    <property type="entry name" value="Gonadotropin_bsu_CS"/>
</dbReference>
<dbReference type="PANTHER" id="PTHR11515">
    <property type="entry name" value="GLYCOPROTEIN HORMONE BETA CHAIN"/>
    <property type="match status" value="1"/>
</dbReference>
<dbReference type="PANTHER" id="PTHR11515:SF5">
    <property type="entry name" value="THYROTROPIN SUBUNIT BETA"/>
    <property type="match status" value="1"/>
</dbReference>
<dbReference type="Pfam" id="PF00007">
    <property type="entry name" value="Cys_knot"/>
    <property type="match status" value="1"/>
</dbReference>
<dbReference type="SMART" id="SM00068">
    <property type="entry name" value="GHB"/>
    <property type="match status" value="1"/>
</dbReference>
<dbReference type="SUPFAM" id="SSF57501">
    <property type="entry name" value="Cystine-knot cytokines"/>
    <property type="match status" value="1"/>
</dbReference>
<dbReference type="PROSITE" id="PS00261">
    <property type="entry name" value="GLYCO_HORMONE_BETA_1"/>
    <property type="match status" value="1"/>
</dbReference>
<dbReference type="PROSITE" id="PS00689">
    <property type="entry name" value="GLYCO_HORMONE_BETA_2"/>
    <property type="match status" value="1"/>
</dbReference>
<sequence>MTAIFLMSMLFGLACGQAMSFCIPTEYMMHVERKECAYCLTINTTICAGYCMTRDFNGKLFLPKYALSQDVCTYRDFMYKTVEIPGCPHHVTPYFSYPVAISCKCGKCNTDYSDCIHEAIKTNYCTKPQKSYVLEFSI</sequence>
<organism>
    <name type="scientific">Sus scrofa</name>
    <name type="common">Pig</name>
    <dbReference type="NCBI Taxonomy" id="9823"/>
    <lineage>
        <taxon>Eukaryota</taxon>
        <taxon>Metazoa</taxon>
        <taxon>Chordata</taxon>
        <taxon>Craniata</taxon>
        <taxon>Vertebrata</taxon>
        <taxon>Euteleostomi</taxon>
        <taxon>Mammalia</taxon>
        <taxon>Eutheria</taxon>
        <taxon>Laurasiatheria</taxon>
        <taxon>Artiodactyla</taxon>
        <taxon>Suina</taxon>
        <taxon>Suidae</taxon>
        <taxon>Sus</taxon>
    </lineage>
</organism>
<evidence type="ECO:0000250" key="1"/>
<evidence type="ECO:0000269" key="2">
    <source>
    </source>
</evidence>
<evidence type="ECO:0000305" key="3"/>
<accession>P01224</accession>
<proteinExistence type="evidence at protein level"/>